<gene>
    <name evidence="1" type="primary">nadK</name>
    <name type="ordered locus">Sca_0608</name>
</gene>
<organism>
    <name type="scientific">Staphylococcus carnosus (strain TM300)</name>
    <dbReference type="NCBI Taxonomy" id="396513"/>
    <lineage>
        <taxon>Bacteria</taxon>
        <taxon>Bacillati</taxon>
        <taxon>Bacillota</taxon>
        <taxon>Bacilli</taxon>
        <taxon>Bacillales</taxon>
        <taxon>Staphylococcaceae</taxon>
        <taxon>Staphylococcus</taxon>
    </lineage>
</organism>
<feature type="chain" id="PRO_1000192520" description="NAD kinase">
    <location>
        <begin position="1"/>
        <end position="269"/>
    </location>
</feature>
<feature type="active site" description="Proton acceptor" evidence="1">
    <location>
        <position position="45"/>
    </location>
</feature>
<feature type="binding site" evidence="1">
    <location>
        <begin position="45"/>
        <end position="46"/>
    </location>
    <ligand>
        <name>NAD(+)</name>
        <dbReference type="ChEBI" id="CHEBI:57540"/>
    </ligand>
</feature>
<feature type="binding site" evidence="1">
    <location>
        <begin position="122"/>
        <end position="123"/>
    </location>
    <ligand>
        <name>NAD(+)</name>
        <dbReference type="ChEBI" id="CHEBI:57540"/>
    </ligand>
</feature>
<feature type="binding site" evidence="1">
    <location>
        <position position="149"/>
    </location>
    <ligand>
        <name>NAD(+)</name>
        <dbReference type="ChEBI" id="CHEBI:57540"/>
    </ligand>
</feature>
<feature type="binding site" evidence="1">
    <location>
        <position position="151"/>
    </location>
    <ligand>
        <name>NAD(+)</name>
        <dbReference type="ChEBI" id="CHEBI:57540"/>
    </ligand>
</feature>
<feature type="binding site" evidence="1">
    <location>
        <position position="186"/>
    </location>
    <ligand>
        <name>NAD(+)</name>
        <dbReference type="ChEBI" id="CHEBI:57540"/>
    </ligand>
</feature>
<name>NADK_STACT</name>
<sequence>MRYNIVSKGDHKSNSIKENMEAQMQDTKMIKDTETPEIVISVGGDGTLLEAFHKYSYRLSETAFVGVHTGHLGFYADWLPHESDKLIREIIDGDYEVIKYPLIDITVNYNDEKNPSHHIALNEATMKTEDNTTLVADVSLRGQHFERFRGDGLCISTPSGSTAYNKALGGALIHPSLRAIQLTEIASINNRVFRTVGSPLVLPAHHYCLITPVDQRTIMTSIDHVTTKHHNVKSIEYKVSEEEIRFARFRPFPFWKRVHDSFISDGRDD</sequence>
<proteinExistence type="inferred from homology"/>
<reference key="1">
    <citation type="journal article" date="2009" name="Appl. Environ. Microbiol.">
        <title>Genome analysis of the meat starter culture bacterium Staphylococcus carnosus TM300.</title>
        <authorList>
            <person name="Rosenstein R."/>
            <person name="Nerz C."/>
            <person name="Biswas L."/>
            <person name="Resch A."/>
            <person name="Raddatz G."/>
            <person name="Schuster S.C."/>
            <person name="Goetz F."/>
        </authorList>
    </citation>
    <scope>NUCLEOTIDE SEQUENCE [LARGE SCALE GENOMIC DNA]</scope>
    <source>
        <strain>TM300</strain>
    </source>
</reference>
<evidence type="ECO:0000255" key="1">
    <source>
        <dbReference type="HAMAP-Rule" id="MF_00361"/>
    </source>
</evidence>
<comment type="function">
    <text evidence="1">Involved in the regulation of the intracellular balance of NAD and NADP, and is a key enzyme in the biosynthesis of NADP. Catalyzes specifically the phosphorylation on 2'-hydroxyl of the adenosine moiety of NAD to yield NADP.</text>
</comment>
<comment type="catalytic activity">
    <reaction evidence="1">
        <text>NAD(+) + ATP = ADP + NADP(+) + H(+)</text>
        <dbReference type="Rhea" id="RHEA:18629"/>
        <dbReference type="ChEBI" id="CHEBI:15378"/>
        <dbReference type="ChEBI" id="CHEBI:30616"/>
        <dbReference type="ChEBI" id="CHEBI:57540"/>
        <dbReference type="ChEBI" id="CHEBI:58349"/>
        <dbReference type="ChEBI" id="CHEBI:456216"/>
        <dbReference type="EC" id="2.7.1.23"/>
    </reaction>
</comment>
<comment type="cofactor">
    <cofactor evidence="1">
        <name>a divalent metal cation</name>
        <dbReference type="ChEBI" id="CHEBI:60240"/>
    </cofactor>
</comment>
<comment type="subcellular location">
    <subcellularLocation>
        <location evidence="1">Cytoplasm</location>
    </subcellularLocation>
</comment>
<comment type="similarity">
    <text evidence="1">Belongs to the NAD kinase family.</text>
</comment>
<keyword id="KW-0067">ATP-binding</keyword>
<keyword id="KW-0963">Cytoplasm</keyword>
<keyword id="KW-0418">Kinase</keyword>
<keyword id="KW-0520">NAD</keyword>
<keyword id="KW-0521">NADP</keyword>
<keyword id="KW-0547">Nucleotide-binding</keyword>
<keyword id="KW-1185">Reference proteome</keyword>
<keyword id="KW-0808">Transferase</keyword>
<accession>B9DIP5</accession>
<protein>
    <recommendedName>
        <fullName evidence="1">NAD kinase</fullName>
        <ecNumber evidence="1">2.7.1.23</ecNumber>
    </recommendedName>
    <alternativeName>
        <fullName evidence="1">ATP-dependent NAD kinase</fullName>
    </alternativeName>
</protein>
<dbReference type="EC" id="2.7.1.23" evidence="1"/>
<dbReference type="EMBL" id="AM295250">
    <property type="protein sequence ID" value="CAL27522.1"/>
    <property type="molecule type" value="Genomic_DNA"/>
</dbReference>
<dbReference type="RefSeq" id="WP_015899865.1">
    <property type="nucleotide sequence ID" value="NC_012121.1"/>
</dbReference>
<dbReference type="SMR" id="B9DIP5"/>
<dbReference type="GeneID" id="93795546"/>
<dbReference type="KEGG" id="sca:SCA_0608"/>
<dbReference type="eggNOG" id="COG0061">
    <property type="taxonomic scope" value="Bacteria"/>
</dbReference>
<dbReference type="HOGENOM" id="CLU_008831_0_3_9"/>
<dbReference type="OrthoDB" id="9774737at2"/>
<dbReference type="BioCyc" id="SCAR396513:SCA_RS03095-MONOMER"/>
<dbReference type="Proteomes" id="UP000000444">
    <property type="component" value="Chromosome"/>
</dbReference>
<dbReference type="GO" id="GO:0005737">
    <property type="term" value="C:cytoplasm"/>
    <property type="evidence" value="ECO:0007669"/>
    <property type="project" value="UniProtKB-SubCell"/>
</dbReference>
<dbReference type="GO" id="GO:0005524">
    <property type="term" value="F:ATP binding"/>
    <property type="evidence" value="ECO:0007669"/>
    <property type="project" value="UniProtKB-KW"/>
</dbReference>
<dbReference type="GO" id="GO:0046872">
    <property type="term" value="F:metal ion binding"/>
    <property type="evidence" value="ECO:0007669"/>
    <property type="project" value="UniProtKB-UniRule"/>
</dbReference>
<dbReference type="GO" id="GO:0051287">
    <property type="term" value="F:NAD binding"/>
    <property type="evidence" value="ECO:0007669"/>
    <property type="project" value="UniProtKB-ARBA"/>
</dbReference>
<dbReference type="GO" id="GO:0003951">
    <property type="term" value="F:NAD+ kinase activity"/>
    <property type="evidence" value="ECO:0007669"/>
    <property type="project" value="UniProtKB-UniRule"/>
</dbReference>
<dbReference type="GO" id="GO:0019674">
    <property type="term" value="P:NAD metabolic process"/>
    <property type="evidence" value="ECO:0007669"/>
    <property type="project" value="InterPro"/>
</dbReference>
<dbReference type="GO" id="GO:0006741">
    <property type="term" value="P:NADP biosynthetic process"/>
    <property type="evidence" value="ECO:0007669"/>
    <property type="project" value="UniProtKB-UniRule"/>
</dbReference>
<dbReference type="FunFam" id="2.60.200.30:FF:000002">
    <property type="entry name" value="NAD kinase"/>
    <property type="match status" value="1"/>
</dbReference>
<dbReference type="Gene3D" id="3.40.50.10330">
    <property type="entry name" value="Probable inorganic polyphosphate/atp-NAD kinase, domain 1"/>
    <property type="match status" value="1"/>
</dbReference>
<dbReference type="Gene3D" id="2.60.200.30">
    <property type="entry name" value="Probable inorganic polyphosphate/atp-NAD kinase, domain 2"/>
    <property type="match status" value="1"/>
</dbReference>
<dbReference type="HAMAP" id="MF_00361">
    <property type="entry name" value="NAD_kinase"/>
    <property type="match status" value="1"/>
</dbReference>
<dbReference type="InterPro" id="IPR017438">
    <property type="entry name" value="ATP-NAD_kinase_N"/>
</dbReference>
<dbReference type="InterPro" id="IPR017437">
    <property type="entry name" value="ATP-NAD_kinase_PpnK-typ_C"/>
</dbReference>
<dbReference type="InterPro" id="IPR016064">
    <property type="entry name" value="NAD/diacylglycerol_kinase_sf"/>
</dbReference>
<dbReference type="InterPro" id="IPR002504">
    <property type="entry name" value="NADK"/>
</dbReference>
<dbReference type="NCBIfam" id="NF003424">
    <property type="entry name" value="PRK04885.1"/>
    <property type="match status" value="1"/>
</dbReference>
<dbReference type="PANTHER" id="PTHR20275">
    <property type="entry name" value="NAD KINASE"/>
    <property type="match status" value="1"/>
</dbReference>
<dbReference type="PANTHER" id="PTHR20275:SF0">
    <property type="entry name" value="NAD KINASE"/>
    <property type="match status" value="1"/>
</dbReference>
<dbReference type="Pfam" id="PF01513">
    <property type="entry name" value="NAD_kinase"/>
    <property type="match status" value="1"/>
</dbReference>
<dbReference type="Pfam" id="PF20143">
    <property type="entry name" value="NAD_kinase_C"/>
    <property type="match status" value="1"/>
</dbReference>
<dbReference type="SUPFAM" id="SSF111331">
    <property type="entry name" value="NAD kinase/diacylglycerol kinase-like"/>
    <property type="match status" value="1"/>
</dbReference>